<accession>C1L2S6</accession>
<feature type="chain" id="PRO_1000211957" description="Probable butyrate kinase">
    <location>
        <begin position="1"/>
        <end position="355"/>
    </location>
</feature>
<protein>
    <recommendedName>
        <fullName evidence="1">Probable butyrate kinase</fullName>
        <shortName evidence="1">BK</shortName>
        <ecNumber evidence="1">2.7.2.7</ecNumber>
    </recommendedName>
    <alternativeName>
        <fullName evidence="1">Branched-chain carboxylic acid kinase</fullName>
    </alternativeName>
</protein>
<organism>
    <name type="scientific">Listeria monocytogenes serotype 4b (strain CLIP80459)</name>
    <dbReference type="NCBI Taxonomy" id="568819"/>
    <lineage>
        <taxon>Bacteria</taxon>
        <taxon>Bacillati</taxon>
        <taxon>Bacillota</taxon>
        <taxon>Bacilli</taxon>
        <taxon>Bacillales</taxon>
        <taxon>Listeriaceae</taxon>
        <taxon>Listeria</taxon>
    </lineage>
</organism>
<proteinExistence type="inferred from homology"/>
<comment type="catalytic activity">
    <reaction evidence="1">
        <text>butanoate + ATP = butanoyl phosphate + ADP</text>
        <dbReference type="Rhea" id="RHEA:13585"/>
        <dbReference type="ChEBI" id="CHEBI:17968"/>
        <dbReference type="ChEBI" id="CHEBI:30616"/>
        <dbReference type="ChEBI" id="CHEBI:58079"/>
        <dbReference type="ChEBI" id="CHEBI:456216"/>
        <dbReference type="EC" id="2.7.2.7"/>
    </reaction>
</comment>
<comment type="subcellular location">
    <subcellularLocation>
        <location evidence="1">Cytoplasm</location>
    </subcellularLocation>
</comment>
<comment type="similarity">
    <text evidence="1">Belongs to the acetokinase family.</text>
</comment>
<gene>
    <name evidence="1" type="primary">buk</name>
    <name type="ordered locus">Lm4b_01379</name>
</gene>
<keyword id="KW-0067">ATP-binding</keyword>
<keyword id="KW-0963">Cytoplasm</keyword>
<keyword id="KW-0418">Kinase</keyword>
<keyword id="KW-0547">Nucleotide-binding</keyword>
<keyword id="KW-0808">Transferase</keyword>
<dbReference type="EC" id="2.7.2.7" evidence="1"/>
<dbReference type="EMBL" id="FM242711">
    <property type="protein sequence ID" value="CAS05142.1"/>
    <property type="molecule type" value="Genomic_DNA"/>
</dbReference>
<dbReference type="RefSeq" id="WP_003727472.1">
    <property type="nucleotide sequence ID" value="NC_012488.1"/>
</dbReference>
<dbReference type="SMR" id="C1L2S6"/>
<dbReference type="KEGG" id="lmc:Lm4b_01379"/>
<dbReference type="HOGENOM" id="CLU_048716_0_0_9"/>
<dbReference type="GO" id="GO:0005737">
    <property type="term" value="C:cytoplasm"/>
    <property type="evidence" value="ECO:0007669"/>
    <property type="project" value="UniProtKB-SubCell"/>
</dbReference>
<dbReference type="GO" id="GO:0008776">
    <property type="term" value="F:acetate kinase activity"/>
    <property type="evidence" value="ECO:0007669"/>
    <property type="project" value="TreeGrafter"/>
</dbReference>
<dbReference type="GO" id="GO:0005524">
    <property type="term" value="F:ATP binding"/>
    <property type="evidence" value="ECO:0007669"/>
    <property type="project" value="UniProtKB-KW"/>
</dbReference>
<dbReference type="GO" id="GO:0047761">
    <property type="term" value="F:butyrate kinase activity"/>
    <property type="evidence" value="ECO:0007669"/>
    <property type="project" value="UniProtKB-UniRule"/>
</dbReference>
<dbReference type="GO" id="GO:0006083">
    <property type="term" value="P:acetate metabolic process"/>
    <property type="evidence" value="ECO:0007669"/>
    <property type="project" value="TreeGrafter"/>
</dbReference>
<dbReference type="CDD" id="cd24011">
    <property type="entry name" value="ASKHA_NBD_BK"/>
    <property type="match status" value="1"/>
</dbReference>
<dbReference type="FunFam" id="3.30.420.40:FF:000233">
    <property type="entry name" value="Probable butyrate kinase"/>
    <property type="match status" value="1"/>
</dbReference>
<dbReference type="Gene3D" id="3.30.420.40">
    <property type="match status" value="2"/>
</dbReference>
<dbReference type="HAMAP" id="MF_00542">
    <property type="entry name" value="Butyrate_kinase"/>
    <property type="match status" value="1"/>
</dbReference>
<dbReference type="InterPro" id="IPR000890">
    <property type="entry name" value="Aliphatic_acid_kin_short-chain"/>
</dbReference>
<dbReference type="InterPro" id="IPR023865">
    <property type="entry name" value="Aliphatic_acid_kinase_CS"/>
</dbReference>
<dbReference type="InterPro" id="IPR043129">
    <property type="entry name" value="ATPase_NBD"/>
</dbReference>
<dbReference type="InterPro" id="IPR011245">
    <property type="entry name" value="Butyrate_kin"/>
</dbReference>
<dbReference type="NCBIfam" id="TIGR02707">
    <property type="entry name" value="butyr_kinase"/>
    <property type="match status" value="1"/>
</dbReference>
<dbReference type="NCBIfam" id="NF002834">
    <property type="entry name" value="PRK03011.1-5"/>
    <property type="match status" value="1"/>
</dbReference>
<dbReference type="PANTHER" id="PTHR21060">
    <property type="entry name" value="ACETATE KINASE"/>
    <property type="match status" value="1"/>
</dbReference>
<dbReference type="PANTHER" id="PTHR21060:SF3">
    <property type="entry name" value="BUTYRATE KINASE 2-RELATED"/>
    <property type="match status" value="1"/>
</dbReference>
<dbReference type="Pfam" id="PF00871">
    <property type="entry name" value="Acetate_kinase"/>
    <property type="match status" value="1"/>
</dbReference>
<dbReference type="PIRSF" id="PIRSF036458">
    <property type="entry name" value="Butyrate_kin"/>
    <property type="match status" value="1"/>
</dbReference>
<dbReference type="PRINTS" id="PR00471">
    <property type="entry name" value="ACETATEKNASE"/>
</dbReference>
<dbReference type="SUPFAM" id="SSF53067">
    <property type="entry name" value="Actin-like ATPase domain"/>
    <property type="match status" value="2"/>
</dbReference>
<dbReference type="PROSITE" id="PS01075">
    <property type="entry name" value="ACETATE_KINASE_1"/>
    <property type="match status" value="1"/>
</dbReference>
<dbReference type="PROSITE" id="PS01076">
    <property type="entry name" value="ACETATE_KINASE_2"/>
    <property type="match status" value="1"/>
</dbReference>
<name>BUK_LISMC</name>
<evidence type="ECO:0000255" key="1">
    <source>
        <dbReference type="HAMAP-Rule" id="MF_00542"/>
    </source>
</evidence>
<reference key="1">
    <citation type="journal article" date="2012" name="BMC Genomics">
        <title>Comparative genomics and transcriptomics of lineages I, II, and III strains of Listeria monocytogenes.</title>
        <authorList>
            <person name="Hain T."/>
            <person name="Ghai R."/>
            <person name="Billion A."/>
            <person name="Kuenne C.T."/>
            <person name="Steinweg C."/>
            <person name="Izar B."/>
            <person name="Mohamed W."/>
            <person name="Mraheil M."/>
            <person name="Domann E."/>
            <person name="Schaffrath S."/>
            <person name="Karst U."/>
            <person name="Goesmann A."/>
            <person name="Oehm S."/>
            <person name="Puhler A."/>
            <person name="Merkl R."/>
            <person name="Vorwerk S."/>
            <person name="Glaser P."/>
            <person name="Garrido P."/>
            <person name="Rusniok C."/>
            <person name="Buchrieser C."/>
            <person name="Goebel W."/>
            <person name="Chakraborty T."/>
        </authorList>
    </citation>
    <scope>NUCLEOTIDE SEQUENCE [LARGE SCALE GENOMIC DNA]</scope>
    <source>
        <strain>CLIP80459</strain>
    </source>
</reference>
<sequence>MSFDVLTINPGSTSTKLAVYQGDKVLFEETVRHTMQELADFNNVQEQFDFRWQVLRRVMDAHGYDVKKLQAVVGRGGLLRPVAGGTYMVTEKMIDDLKENKYGEHASNLGALLAKKLADELTIPSFIVDPVVVDEMQEIARISGNAFIARKSIFHALNHKAAGRKIAKELGKDYEKMNFVIAHLGGGISVAAHRQGKAVDVNNALDGDGPFSPERSGSLPMNDFLEACFSGKWTKRELHELIVGRGGMISYLGTNSMLEVEAKVQAGDVKAIEAFDAMAYQVSKEIGACSVVLQGKVDAIILTGGLARSELFTNKIIEQTNWITSVIIEPGEDELEALNSGVQRVLAGLEKEKEY</sequence>